<gene>
    <name evidence="1" type="primary">N</name>
</gene>
<organism>
    <name type="scientific">Lymphocytic choriomeningitis virus (strain WE)</name>
    <name type="common">LCMV</name>
    <dbReference type="NCBI Taxonomy" id="11627"/>
    <lineage>
        <taxon>Viruses</taxon>
        <taxon>Riboviria</taxon>
        <taxon>Orthornavirae</taxon>
        <taxon>Negarnaviricota</taxon>
        <taxon>Polyploviricotina</taxon>
        <taxon>Ellioviricetes</taxon>
        <taxon>Bunyavirales</taxon>
        <taxon>Arenaviridae</taxon>
        <taxon>Mammarenavirus</taxon>
        <taxon>Mammarenavirus choriomeningitidis</taxon>
    </lineage>
</organism>
<organismHost>
    <name type="scientific">Homo sapiens</name>
    <name type="common">Human</name>
    <dbReference type="NCBI Taxonomy" id="9606"/>
</organismHost>
<organismHost>
    <name type="scientific">Mesocricetus auratus</name>
    <name type="common">Golden hamster</name>
    <dbReference type="NCBI Taxonomy" id="10036"/>
</organismHost>
<organismHost>
    <name type="scientific">Mus musculus</name>
    <name type="common">Mouse</name>
    <dbReference type="NCBI Taxonomy" id="10090"/>
</organismHost>
<reference key="1">
    <citation type="journal article" date="1985" name="Virus Res.">
        <title>Complete sequence of the S RNA of lymphocytic choriomeningitis virus (WE strain) compared to that of Pichinde arenavirus.</title>
        <authorList>
            <person name="Romanowski V."/>
            <person name="Matsuura Y."/>
            <person name="Bishop D.H.L."/>
        </authorList>
    </citation>
    <scope>NUCLEOTIDE SEQUENCE [GENOMIC RNA]</scope>
</reference>
<name>NCAP_LYCVW</name>
<feature type="chain" id="PRO_0000079194" description="Nucleoprotein">
    <location>
        <begin position="1"/>
        <end position="558"/>
    </location>
</feature>
<feature type="region of interest" description="Binding site for the cap structure m7GTP" evidence="1">
    <location>
        <begin position="54"/>
        <end position="237"/>
    </location>
</feature>
<feature type="binding site" evidence="1">
    <location>
        <position position="382"/>
    </location>
    <ligand>
        <name>Mn(2+)</name>
        <dbReference type="ChEBI" id="CHEBI:29035"/>
    </ligand>
</feature>
<feature type="binding site" evidence="1">
    <location>
        <position position="384"/>
    </location>
    <ligand>
        <name>Mn(2+)</name>
        <dbReference type="ChEBI" id="CHEBI:29035"/>
    </ligand>
</feature>
<feature type="binding site" evidence="1">
    <location>
        <position position="392"/>
    </location>
    <ligand>
        <name>Zn(2+)</name>
        <dbReference type="ChEBI" id="CHEBI:29105"/>
    </ligand>
</feature>
<feature type="binding site" evidence="1">
    <location>
        <position position="499"/>
    </location>
    <ligand>
        <name>Zn(2+)</name>
        <dbReference type="ChEBI" id="CHEBI:29105"/>
    </ligand>
</feature>
<feature type="binding site" evidence="1">
    <location>
        <position position="502"/>
    </location>
    <ligand>
        <name>Zn(2+)</name>
        <dbReference type="ChEBI" id="CHEBI:29105"/>
    </ligand>
</feature>
<feature type="binding site" evidence="1">
    <location>
        <position position="518"/>
    </location>
    <ligand>
        <name>Zn(2+)</name>
        <dbReference type="ChEBI" id="CHEBI:29105"/>
    </ligand>
</feature>
<feature type="binding site" evidence="1">
    <location>
        <position position="522"/>
    </location>
    <ligand>
        <name>Mn(2+)</name>
        <dbReference type="ChEBI" id="CHEBI:29035"/>
    </ligand>
</feature>
<feature type="site" description="Important for exonuclease activity" evidence="1">
    <location>
        <position position="459"/>
    </location>
</feature>
<sequence>MSLSKEVKSFQWTQALRRELQGFTSDVKAAVIKDATSLLNGLDFSEVSNVQRIMRKERRDDKDLQRLRSLNQTVHSLVDPKSTSKKNVLKVGRLSAEELMTLAADLEKLKAKIMRTERPQASGVYMGNLTAQQLDQRSQILQMVGMRRPQQGASGVVRVWDVKDSSLLNNQFGTMPSLTMACMAKQSQTPLNDVVQALTDLGLLYTVKYPNLSDLERLKDKHPVLGVITEQQSSINISGYNFSLGAAVKAGAALLHGGNMLESILIKPSNSEDLLKAVLGAKKKLNMFVSDQVGDRNPYENILYKVCLSGEGWPYIACRTSVVGRAWENTTIDLTNEKLVANSSRPVPGAAGPPQVGLSYSQTMLLKDLMGGIDPNAPTWIDIEGRFNDPVEIAIFQPQNGQFIHFYREPTDQKQFKQDSKYSHGMDLADLFNAQAGLTSSVIGALPQGMVLSCQGSDDIRKLLDSQNRRDIKLIDVEMTKEASREYEDKVWDKYGWLCKMHTGVVRDKKKKEITPHCALMDCIIFESASKARLPDLKTVHNILPHDLIFRGPNVVTL</sequence>
<evidence type="ECO:0000255" key="1">
    <source>
        <dbReference type="HAMAP-Rule" id="MF_04085"/>
    </source>
</evidence>
<comment type="function">
    <text evidence="1">Encapsidates the genome, protecting it from nucleases. The encapsidated genomic RNA is termed the nucleocapsid (NC). Serves as template for viral transcription and replication. The increased presence of protein N in host cell does not seem to trigger the switch from transcription to replication as observed in other negative strain RNA viruses. Through the interaction with host IKBKE, strongly inhibits the phosphorylation and nuclear translocation of host IRF3, a protein involved in interferon activation pathway, leading to the inhibition of interferon-beta and IRF3-dependent promoters activation. Also encodes a functional 3'-5' exoribonuclease that degrades preferentially dsRNA substrates and thereby participates in the suppression of interferon induction.</text>
</comment>
<comment type="subunit">
    <text evidence="1">Homomultimerizes to form the nucleocapsid. Binds to viral genomic RNA. Interacts with glycoprotein G2. Interacts with protein Z; this interaction probably directs the encapsidated genome to budding sites. Interacts with protein L; this interaction does not interfere with Z-L interaction. Interacts with host IKBKE (via Protein kinase domain); the interaction inhibits IKBKE kinase activity.</text>
</comment>
<comment type="subcellular location">
    <subcellularLocation>
        <location evidence="1">Virion</location>
    </subcellularLocation>
    <subcellularLocation>
        <location evidence="1">Host cytoplasm</location>
    </subcellularLocation>
</comment>
<comment type="domain">
    <text evidence="1">The N-terminal region is important for the cap-binding activity while the C-terminal region contains the 3'-5' exoribonuclease activity. A CCHE zinc binding site is present in the C-terminal region and may thus contribute to the substrate binding and/or the specificity of the exonuclease activity.</text>
</comment>
<comment type="similarity">
    <text evidence="1">Belongs to the arenaviridae nucleocapsid protein family.</text>
</comment>
<protein>
    <recommendedName>
        <fullName evidence="1">Nucleoprotein</fullName>
        <ecNumber evidence="1">3.1.13.-</ecNumber>
    </recommendedName>
    <alternativeName>
        <fullName evidence="1">Nucleocapsid protein</fullName>
    </alternativeName>
    <alternativeName>
        <fullName evidence="1">Protein N</fullName>
    </alternativeName>
</protein>
<dbReference type="EC" id="3.1.13.-" evidence="1"/>
<dbReference type="EMBL" id="M22017">
    <property type="protein sequence ID" value="AAA46267.1"/>
    <property type="molecule type" value="Genomic_RNA"/>
</dbReference>
<dbReference type="PIR" id="B23481">
    <property type="entry name" value="VHXPLC"/>
</dbReference>
<dbReference type="SMR" id="P07400"/>
<dbReference type="GO" id="GO:0019029">
    <property type="term" value="C:helical viral capsid"/>
    <property type="evidence" value="ECO:0007669"/>
    <property type="project" value="UniProtKB-UniRule"/>
</dbReference>
<dbReference type="GO" id="GO:0030430">
    <property type="term" value="C:host cell cytoplasm"/>
    <property type="evidence" value="ECO:0007669"/>
    <property type="project" value="UniProtKB-SubCell"/>
</dbReference>
<dbReference type="GO" id="GO:1990904">
    <property type="term" value="C:ribonucleoprotein complex"/>
    <property type="evidence" value="ECO:0007669"/>
    <property type="project" value="UniProtKB-KW"/>
</dbReference>
<dbReference type="GO" id="GO:0019013">
    <property type="term" value="C:viral nucleocapsid"/>
    <property type="evidence" value="ECO:0007669"/>
    <property type="project" value="UniProtKB-UniRule"/>
</dbReference>
<dbReference type="GO" id="GO:0016787">
    <property type="term" value="F:hydrolase activity"/>
    <property type="evidence" value="ECO:0007669"/>
    <property type="project" value="UniProtKB-KW"/>
</dbReference>
<dbReference type="GO" id="GO:0046872">
    <property type="term" value="F:metal ion binding"/>
    <property type="evidence" value="ECO:0007669"/>
    <property type="project" value="UniProtKB-UniRule"/>
</dbReference>
<dbReference type="GO" id="GO:0003723">
    <property type="term" value="F:RNA binding"/>
    <property type="evidence" value="ECO:0007669"/>
    <property type="project" value="UniProtKB-UniRule"/>
</dbReference>
<dbReference type="GO" id="GO:0039689">
    <property type="term" value="P:negative stranded viral RNA replication"/>
    <property type="evidence" value="ECO:0000250"/>
    <property type="project" value="UniProtKB"/>
</dbReference>
<dbReference type="GO" id="GO:0039696">
    <property type="term" value="P:RNA-templated viral transcription"/>
    <property type="evidence" value="ECO:0000250"/>
    <property type="project" value="UniProtKB"/>
</dbReference>
<dbReference type="GO" id="GO:0039724">
    <property type="term" value="P:symbiont-mediated suppression of host cytoplasmic pattern recognition receptor signaling pathway via inhibition of IKBKE activity"/>
    <property type="evidence" value="ECO:0007669"/>
    <property type="project" value="UniProtKB-UniRule"/>
</dbReference>
<dbReference type="FunFam" id="1.10.150.550:FF:000001">
    <property type="entry name" value="Nucleoprotein"/>
    <property type="match status" value="1"/>
</dbReference>
<dbReference type="FunFam" id="1.10.150.550:FF:000003">
    <property type="entry name" value="Nucleoprotein"/>
    <property type="match status" value="1"/>
</dbReference>
<dbReference type="FunFam" id="3.30.420.410:FF:000001">
    <property type="entry name" value="Nucleoprotein"/>
    <property type="match status" value="1"/>
</dbReference>
<dbReference type="Gene3D" id="3.30.420.410">
    <property type="entry name" value="Arenaviral nucleoprotein, C-terminal domain"/>
    <property type="match status" value="1"/>
</dbReference>
<dbReference type="Gene3D" id="1.10.150.550">
    <property type="entry name" value="Arenavirus nucleocapsid protein, head domain"/>
    <property type="match status" value="3"/>
</dbReference>
<dbReference type="HAMAP" id="MF_04085">
    <property type="entry name" value="ARENA_NCAP"/>
    <property type="match status" value="1"/>
</dbReference>
<dbReference type="InterPro" id="IPR000229">
    <property type="entry name" value="Nucleocapsid_arenaviridae"/>
</dbReference>
<dbReference type="InterPro" id="IPR035084">
    <property type="entry name" value="Nucleocapsid_C_arenaviridae"/>
</dbReference>
<dbReference type="InterPro" id="IPR038115">
    <property type="entry name" value="Nucleocapsid_C_sf"/>
</dbReference>
<dbReference type="InterPro" id="IPR035083">
    <property type="entry name" value="Nucleocapsid_N_arenaviridae"/>
</dbReference>
<dbReference type="Pfam" id="PF17290">
    <property type="entry name" value="Arena_ncap_C"/>
    <property type="match status" value="1"/>
</dbReference>
<dbReference type="Pfam" id="PF00843">
    <property type="entry name" value="Arena_nucleocap"/>
    <property type="match status" value="1"/>
</dbReference>
<dbReference type="PIRSF" id="PIRSF004029">
    <property type="entry name" value="N_ArenaV"/>
    <property type="match status" value="1"/>
</dbReference>
<keyword id="KW-0167">Capsid protein</keyword>
<keyword id="KW-1139">Helical capsid protein</keyword>
<keyword id="KW-1035">Host cytoplasm</keyword>
<keyword id="KW-0945">Host-virus interaction</keyword>
<keyword id="KW-0378">Hydrolase</keyword>
<keyword id="KW-1224">Inhibition of host IKBKE by virus</keyword>
<keyword id="KW-1090">Inhibition of host innate immune response by virus</keyword>
<keyword id="KW-1113">Inhibition of host RLR pathway by virus</keyword>
<keyword id="KW-0922">Interferon antiviral system evasion</keyword>
<keyword id="KW-0464">Manganese</keyword>
<keyword id="KW-0479">Metal-binding</keyword>
<keyword id="KW-0687">Ribonucleoprotein</keyword>
<keyword id="KW-0694">RNA-binding</keyword>
<keyword id="KW-0899">Viral immunoevasion</keyword>
<keyword id="KW-0543">Viral nucleoprotein</keyword>
<keyword id="KW-0946">Virion</keyword>
<keyword id="KW-0862">Zinc</keyword>
<accession>P07400</accession>
<proteinExistence type="inferred from homology"/>